<keyword id="KW-0067">ATP-binding</keyword>
<keyword id="KW-0170">Cobalt</keyword>
<keyword id="KW-0963">Cytoplasm</keyword>
<keyword id="KW-0460">Magnesium</keyword>
<keyword id="KW-0479">Metal-binding</keyword>
<keyword id="KW-0547">Nucleotide-binding</keyword>
<keyword id="KW-0554">One-carbon metabolism</keyword>
<keyword id="KW-0630">Potassium</keyword>
<keyword id="KW-1185">Reference proteome</keyword>
<keyword id="KW-0808">Transferase</keyword>
<name>METK_GOSHI</name>
<organism>
    <name type="scientific">Gossypium hirsutum</name>
    <name type="common">Upland cotton</name>
    <name type="synonym">Gossypium mexicanum</name>
    <dbReference type="NCBI Taxonomy" id="3635"/>
    <lineage>
        <taxon>Eukaryota</taxon>
        <taxon>Viridiplantae</taxon>
        <taxon>Streptophyta</taxon>
        <taxon>Embryophyta</taxon>
        <taxon>Tracheophyta</taxon>
        <taxon>Spermatophyta</taxon>
        <taxon>Magnoliopsida</taxon>
        <taxon>eudicotyledons</taxon>
        <taxon>Gunneridae</taxon>
        <taxon>Pentapetalae</taxon>
        <taxon>rosids</taxon>
        <taxon>malvids</taxon>
        <taxon>Malvales</taxon>
        <taxon>Malvaceae</taxon>
        <taxon>Malvoideae</taxon>
        <taxon>Gossypium</taxon>
    </lineage>
</organism>
<evidence type="ECO:0000250" key="1"/>
<evidence type="ECO:0000250" key="2">
    <source>
        <dbReference type="UniProtKB" id="P0A817"/>
    </source>
</evidence>
<evidence type="ECO:0000250" key="3">
    <source>
        <dbReference type="UniProtKB" id="P13444"/>
    </source>
</evidence>
<evidence type="ECO:0000250" key="4">
    <source>
        <dbReference type="UniProtKB" id="Q00266"/>
    </source>
</evidence>
<evidence type="ECO:0000250" key="5">
    <source>
        <dbReference type="UniProtKB" id="Q96551"/>
    </source>
</evidence>
<evidence type="ECO:0000305" key="6"/>
<dbReference type="EC" id="2.5.1.6" evidence="5"/>
<dbReference type="EMBL" id="EF643509">
    <property type="protein sequence ID" value="ABS52575.1"/>
    <property type="molecule type" value="mRNA"/>
</dbReference>
<dbReference type="RefSeq" id="NP_001313968.1">
    <property type="nucleotide sequence ID" value="NM_001327039.1"/>
</dbReference>
<dbReference type="SMR" id="A7L2Z6"/>
<dbReference type="STRING" id="3635.A7L2Z6"/>
<dbReference type="PaxDb" id="3635-A7L2Z6"/>
<dbReference type="GeneID" id="107910531"/>
<dbReference type="KEGG" id="ghi:107910531"/>
<dbReference type="UniPathway" id="UPA00315">
    <property type="reaction ID" value="UER00080"/>
</dbReference>
<dbReference type="Proteomes" id="UP000189702">
    <property type="component" value="Unplaced"/>
</dbReference>
<dbReference type="GO" id="GO:0005829">
    <property type="term" value="C:cytosol"/>
    <property type="evidence" value="ECO:0000318"/>
    <property type="project" value="GO_Central"/>
</dbReference>
<dbReference type="GO" id="GO:0005524">
    <property type="term" value="F:ATP binding"/>
    <property type="evidence" value="ECO:0007669"/>
    <property type="project" value="UniProtKB-KW"/>
</dbReference>
<dbReference type="GO" id="GO:0046872">
    <property type="term" value="F:metal ion binding"/>
    <property type="evidence" value="ECO:0007669"/>
    <property type="project" value="UniProtKB-KW"/>
</dbReference>
<dbReference type="GO" id="GO:0004478">
    <property type="term" value="F:methionine adenosyltransferase activity"/>
    <property type="evidence" value="ECO:0000318"/>
    <property type="project" value="GO_Central"/>
</dbReference>
<dbReference type="GO" id="GO:0006730">
    <property type="term" value="P:one-carbon metabolic process"/>
    <property type="evidence" value="ECO:0007669"/>
    <property type="project" value="UniProtKB-KW"/>
</dbReference>
<dbReference type="GO" id="GO:0006556">
    <property type="term" value="P:S-adenosylmethionine biosynthetic process"/>
    <property type="evidence" value="ECO:0000318"/>
    <property type="project" value="GO_Central"/>
</dbReference>
<dbReference type="CDD" id="cd18079">
    <property type="entry name" value="S-AdoMet_synt"/>
    <property type="match status" value="1"/>
</dbReference>
<dbReference type="FunFam" id="3.30.300.10:FF:000001">
    <property type="entry name" value="S-adenosylmethionine synthase"/>
    <property type="match status" value="1"/>
</dbReference>
<dbReference type="FunFam" id="3.30.300.10:FF:000003">
    <property type="entry name" value="S-adenosylmethionine synthase"/>
    <property type="match status" value="1"/>
</dbReference>
<dbReference type="FunFam" id="3.30.300.10:FF:000004">
    <property type="entry name" value="S-adenosylmethionine synthase"/>
    <property type="match status" value="1"/>
</dbReference>
<dbReference type="Gene3D" id="3.30.300.10">
    <property type="match status" value="3"/>
</dbReference>
<dbReference type="HAMAP" id="MF_00086">
    <property type="entry name" value="S_AdoMet_synth1"/>
    <property type="match status" value="1"/>
</dbReference>
<dbReference type="InterPro" id="IPR022631">
    <property type="entry name" value="ADOMET_SYNTHASE_CS"/>
</dbReference>
<dbReference type="InterPro" id="IPR022630">
    <property type="entry name" value="S-AdoMet_synt_C"/>
</dbReference>
<dbReference type="InterPro" id="IPR022629">
    <property type="entry name" value="S-AdoMet_synt_central"/>
</dbReference>
<dbReference type="InterPro" id="IPR022628">
    <property type="entry name" value="S-AdoMet_synt_N"/>
</dbReference>
<dbReference type="InterPro" id="IPR002133">
    <property type="entry name" value="S-AdoMet_synthetase"/>
</dbReference>
<dbReference type="InterPro" id="IPR022636">
    <property type="entry name" value="S-AdoMet_synthetase_sfam"/>
</dbReference>
<dbReference type="NCBIfam" id="TIGR01034">
    <property type="entry name" value="metK"/>
    <property type="match status" value="1"/>
</dbReference>
<dbReference type="PANTHER" id="PTHR11964">
    <property type="entry name" value="S-ADENOSYLMETHIONINE SYNTHETASE"/>
    <property type="match status" value="1"/>
</dbReference>
<dbReference type="Pfam" id="PF02773">
    <property type="entry name" value="S-AdoMet_synt_C"/>
    <property type="match status" value="1"/>
</dbReference>
<dbReference type="Pfam" id="PF02772">
    <property type="entry name" value="S-AdoMet_synt_M"/>
    <property type="match status" value="1"/>
</dbReference>
<dbReference type="Pfam" id="PF00438">
    <property type="entry name" value="S-AdoMet_synt_N"/>
    <property type="match status" value="1"/>
</dbReference>
<dbReference type="PIRSF" id="PIRSF000497">
    <property type="entry name" value="MAT"/>
    <property type="match status" value="1"/>
</dbReference>
<dbReference type="SUPFAM" id="SSF55973">
    <property type="entry name" value="S-adenosylmethionine synthetase"/>
    <property type="match status" value="3"/>
</dbReference>
<dbReference type="PROSITE" id="PS00376">
    <property type="entry name" value="ADOMET_SYNTHASE_1"/>
    <property type="match status" value="1"/>
</dbReference>
<dbReference type="PROSITE" id="PS00377">
    <property type="entry name" value="ADOMET_SYNTHASE_2"/>
    <property type="match status" value="1"/>
</dbReference>
<comment type="function">
    <text evidence="5">Catalyzes the formation of S-adenosylmethionine from methionine and ATP. The reaction comprises two steps that are both catalyzed by the same enzyme: formation of S-adenosylmethionine (AdoMet) and triphosphate, and subsequent hydrolysis of the triphosphate.</text>
</comment>
<comment type="catalytic activity">
    <reaction evidence="5">
        <text>L-methionine + ATP + H2O = S-adenosyl-L-methionine + phosphate + diphosphate</text>
        <dbReference type="Rhea" id="RHEA:21080"/>
        <dbReference type="ChEBI" id="CHEBI:15377"/>
        <dbReference type="ChEBI" id="CHEBI:30616"/>
        <dbReference type="ChEBI" id="CHEBI:33019"/>
        <dbReference type="ChEBI" id="CHEBI:43474"/>
        <dbReference type="ChEBI" id="CHEBI:57844"/>
        <dbReference type="ChEBI" id="CHEBI:59789"/>
        <dbReference type="EC" id="2.5.1.6"/>
    </reaction>
</comment>
<comment type="cofactor">
    <cofactor evidence="5">
        <name>Mn(2+)</name>
        <dbReference type="ChEBI" id="CHEBI:29035"/>
    </cofactor>
    <cofactor evidence="5">
        <name>Mg(2+)</name>
        <dbReference type="ChEBI" id="CHEBI:18420"/>
    </cofactor>
    <cofactor evidence="5">
        <name>Co(2+)</name>
        <dbReference type="ChEBI" id="CHEBI:48828"/>
    </cofactor>
    <text evidence="3 5">Binds 2 divalent ions per subunit. The metal ions interact primarily with the substrate (By similarity). Can utilize magnesium, manganese or cobalt (in vitro) (By similarity).</text>
</comment>
<comment type="cofactor">
    <cofactor evidence="5">
        <name>K(+)</name>
        <dbReference type="ChEBI" id="CHEBI:29103"/>
    </cofactor>
    <text evidence="3">Binds 1 potassium ion per subunit. The potassium ion interacts primarily with the substrate (By similarity).</text>
</comment>
<comment type="pathway">
    <text evidence="5">Amino-acid biosynthesis; S-adenosyl-L-methionine biosynthesis; S-adenosyl-L-methionine from L-methionine: step 1/1.</text>
</comment>
<comment type="subunit">
    <text evidence="1">Homotetramer.</text>
</comment>
<comment type="subcellular location">
    <subcellularLocation>
        <location evidence="1">Cytoplasm</location>
    </subcellularLocation>
</comment>
<comment type="similarity">
    <text evidence="6">Belongs to the AdoMet synthase family.</text>
</comment>
<proteinExistence type="evidence at transcript level"/>
<protein>
    <recommendedName>
        <fullName>S-adenosylmethionine synthase</fullName>
        <shortName>AdoMet synthase</shortName>
        <ecNumber evidence="5">2.5.1.6</ecNumber>
    </recommendedName>
    <alternativeName>
        <fullName>Methionine adenosyltransferase</fullName>
        <shortName>MAT</shortName>
    </alternativeName>
</protein>
<gene>
    <name type="primary">SAMS</name>
</gene>
<feature type="chain" id="PRO_0000363024" description="S-adenosylmethionine synthase">
    <location>
        <begin position="1"/>
        <end position="393"/>
    </location>
</feature>
<feature type="binding site" evidence="3">
    <location>
        <position position="9"/>
    </location>
    <ligand>
        <name>Mg(2+)</name>
        <dbReference type="ChEBI" id="CHEBI:18420"/>
    </ligand>
</feature>
<feature type="binding site" description="in other chain" evidence="4">
    <location>
        <position position="15"/>
    </location>
    <ligand>
        <name>ATP</name>
        <dbReference type="ChEBI" id="CHEBI:30616"/>
        <note>ligand shared between two neighboring subunits</note>
    </ligand>
</feature>
<feature type="binding site" evidence="2">
    <location>
        <position position="43"/>
    </location>
    <ligand>
        <name>K(+)</name>
        <dbReference type="ChEBI" id="CHEBI:29103"/>
    </ligand>
</feature>
<feature type="binding site" description="in other chain" evidence="2">
    <location>
        <position position="56"/>
    </location>
    <ligand>
        <name>L-methionine</name>
        <dbReference type="ChEBI" id="CHEBI:57844"/>
        <note>ligand shared between two neighboring subunits</note>
    </ligand>
</feature>
<feature type="binding site" description="in other chain" evidence="2">
    <location>
        <position position="99"/>
    </location>
    <ligand>
        <name>L-methionine</name>
        <dbReference type="ChEBI" id="CHEBI:57844"/>
        <note>ligand shared between two neighboring subunits</note>
    </ligand>
</feature>
<feature type="binding site" description="in other chain" evidence="4">
    <location>
        <begin position="167"/>
        <end position="169"/>
    </location>
    <ligand>
        <name>ATP</name>
        <dbReference type="ChEBI" id="CHEBI:30616"/>
        <note>ligand shared between two neighboring subunits</note>
    </ligand>
</feature>
<feature type="binding site" description="in other chain" evidence="4">
    <location>
        <begin position="235"/>
        <end position="238"/>
    </location>
    <ligand>
        <name>ATP</name>
        <dbReference type="ChEBI" id="CHEBI:30616"/>
        <note>ligand shared between two neighboring subunits</note>
    </ligand>
</feature>
<feature type="binding site" description="in other chain" evidence="4">
    <location>
        <position position="246"/>
    </location>
    <ligand>
        <name>ATP</name>
        <dbReference type="ChEBI" id="CHEBI:30616"/>
        <note>ligand shared between two neighboring subunits</note>
    </ligand>
</feature>
<feature type="binding site" evidence="2">
    <location>
        <position position="246"/>
    </location>
    <ligand>
        <name>L-methionine</name>
        <dbReference type="ChEBI" id="CHEBI:57844"/>
        <note>ligand shared between two neighboring subunits</note>
    </ligand>
</feature>
<feature type="binding site" description="in other chain" evidence="2">
    <location>
        <begin position="252"/>
        <end position="253"/>
    </location>
    <ligand>
        <name>ATP</name>
        <dbReference type="ChEBI" id="CHEBI:30616"/>
        <note>ligand shared between two neighboring subunits</note>
    </ligand>
</feature>
<feature type="binding site" evidence="2">
    <location>
        <position position="269"/>
    </location>
    <ligand>
        <name>ATP</name>
        <dbReference type="ChEBI" id="CHEBI:30616"/>
        <note>ligand shared between two neighboring subunits</note>
    </ligand>
</feature>
<feature type="binding site" evidence="2">
    <location>
        <position position="273"/>
    </location>
    <ligand>
        <name>ATP</name>
        <dbReference type="ChEBI" id="CHEBI:30616"/>
        <note>ligand shared between two neighboring subunits</note>
    </ligand>
</feature>
<feature type="binding site" evidence="3">
    <location>
        <position position="277"/>
    </location>
    <ligand>
        <name>ATP</name>
        <dbReference type="ChEBI" id="CHEBI:30616"/>
        <note>ligand shared between two neighboring subunits</note>
    </ligand>
</feature>
<feature type="binding site" description="in other chain" evidence="2">
    <location>
        <position position="277"/>
    </location>
    <ligand>
        <name>L-methionine</name>
        <dbReference type="ChEBI" id="CHEBI:57844"/>
        <note>ligand shared between two neighboring subunits</note>
    </ligand>
</feature>
<accession>A7L2Z6</accession>
<reference key="1">
    <citation type="submission" date="2007-06" db="EMBL/GenBank/DDBJ databases">
        <title>Cloning and characterization one gene which related with fiber development in Gossypium hirsutum L.</title>
        <authorList>
            <person name="Zhang T.-Z."/>
        </authorList>
    </citation>
    <scope>NUCLEOTIDE SEQUENCE [MRNA]</scope>
</reference>
<sequence>METFLFTSESVNEGHPDKLCDQISDAVLDACLAQDPESKVACETCSKTNMVMVFGEITTKADVDYEKIVRDTCRGIGFTSDDVGLDADNCKALVNIEQQSPDIAQGVHGHLSKRPEEIGAGDQGHMFGYATDETPELMPLTHVLATRLGARLTEVRKNGTCPWLRPDGKTQVTVEYYNDKGAMVPVRVHTVLISTQHDETVTNDEIAADLKEHVIKPVIPEKYLDEKTIFHLNPSGRFVIGGPHGDAGLTGRKIIIDTYGGWGAHGGGAFSGKDPTKVDRSGAYIVRQAAKSIVANGLARRCVVQVSYAIGVPEPLSVFVDTYGTGKIPDKEILKIVKETFDFRPGMIAINLDLKRGGNSRFLKTAAYGHFGRDDTDFTWEVVKPLKWDKVHA</sequence>